<proteinExistence type="inferred from homology"/>
<evidence type="ECO:0000250" key="1"/>
<evidence type="ECO:0000255" key="2">
    <source>
        <dbReference type="PROSITE-ProRule" id="PRU00241"/>
    </source>
</evidence>
<evidence type="ECO:0000305" key="3"/>
<organism>
    <name type="scientific">Azotobacter chroococcum mcd 1</name>
    <dbReference type="NCBI Taxonomy" id="355"/>
    <lineage>
        <taxon>Bacteria</taxon>
        <taxon>Pseudomonadati</taxon>
        <taxon>Pseudomonadota</taxon>
        <taxon>Gammaproteobacteria</taxon>
        <taxon>Pseudomonadales</taxon>
        <taxon>Pseudomonadaceae</taxon>
        <taxon>Azotobacter</taxon>
    </lineage>
</organism>
<feature type="chain" id="PRO_0000135054" description="Rubredoxin in uptake hydrogenase operon">
    <location>
        <begin position="1"/>
        <end position="72"/>
    </location>
</feature>
<feature type="domain" description="Rubredoxin-like" evidence="2">
    <location>
        <begin position="19"/>
        <end position="70"/>
    </location>
</feature>
<feature type="binding site" evidence="2">
    <location>
        <position position="24"/>
    </location>
    <ligand>
        <name>Fe cation</name>
        <dbReference type="ChEBI" id="CHEBI:24875"/>
    </ligand>
</feature>
<feature type="binding site" evidence="2">
    <location>
        <position position="27"/>
    </location>
    <ligand>
        <name>Fe cation</name>
        <dbReference type="ChEBI" id="CHEBI:24875"/>
    </ligand>
</feature>
<feature type="binding site" evidence="2">
    <location>
        <position position="57"/>
    </location>
    <ligand>
        <name>Fe cation</name>
        <dbReference type="ChEBI" id="CHEBI:24875"/>
    </ligand>
</feature>
<feature type="binding site" evidence="2">
    <location>
        <position position="60"/>
    </location>
    <ligand>
        <name>Fe cation</name>
        <dbReference type="ChEBI" id="CHEBI:24875"/>
    </ligand>
</feature>
<accession>P48343</accession>
<reference key="1">
    <citation type="journal article" date="1994" name="J. Mol. Biol.">
        <title>Sequences, organization and analysis of the hupZMNOQRTV genes from the Azotobacter chroococcum hydrogenase gene cluster.</title>
        <authorList>
            <person name="Du L."/>
            <person name="Tibelius K.H."/>
            <person name="Souza E.M."/>
            <person name="Garg R.P."/>
            <person name="Yates M.G."/>
        </authorList>
    </citation>
    <scope>NUCLEOTIDE SEQUENCE [GENOMIC DNA]</scope>
</reference>
<keyword id="KW-0249">Electron transport</keyword>
<keyword id="KW-0408">Iron</keyword>
<keyword id="KW-0479">Metal-binding</keyword>
<keyword id="KW-0813">Transport</keyword>
<comment type="function">
    <text>Could be an electron transport intermediate in hydrogen oxidation.</text>
</comment>
<comment type="cofactor">
    <cofactor evidence="1">
        <name>Fe(3+)</name>
        <dbReference type="ChEBI" id="CHEBI:29034"/>
    </cofactor>
    <text evidence="1">Binds 1 Fe(3+) ion per subunit.</text>
</comment>
<comment type="similarity">
    <text evidence="3">Belongs to the rubredoxin family.</text>
</comment>
<sequence>MSTRFEGSYLGNAARLADDAVLECKICWHRYDPAVGDEVWQILAGTPFAALPAHWRCPQCDGDREQFMVVDD</sequence>
<name>RUBR_AZOCH</name>
<protein>
    <recommendedName>
        <fullName>Rubredoxin in uptake hydrogenase operon</fullName>
    </recommendedName>
</protein>
<dbReference type="EMBL" id="L25315">
    <property type="protein sequence ID" value="AAA64452.1"/>
    <property type="molecule type" value="Genomic_DNA"/>
</dbReference>
<dbReference type="PIR" id="S53661">
    <property type="entry name" value="S53661"/>
</dbReference>
<dbReference type="SMR" id="P48343"/>
<dbReference type="GO" id="GO:0009055">
    <property type="term" value="F:electron transfer activity"/>
    <property type="evidence" value="ECO:0007669"/>
    <property type="project" value="TreeGrafter"/>
</dbReference>
<dbReference type="GO" id="GO:0005506">
    <property type="term" value="F:iron ion binding"/>
    <property type="evidence" value="ECO:0007669"/>
    <property type="project" value="InterPro"/>
</dbReference>
<dbReference type="GO" id="GO:0043448">
    <property type="term" value="P:alkane catabolic process"/>
    <property type="evidence" value="ECO:0007669"/>
    <property type="project" value="TreeGrafter"/>
</dbReference>
<dbReference type="CDD" id="cd00730">
    <property type="entry name" value="rubredoxin"/>
    <property type="match status" value="1"/>
</dbReference>
<dbReference type="Gene3D" id="2.20.28.10">
    <property type="match status" value="1"/>
</dbReference>
<dbReference type="InterPro" id="IPR024934">
    <property type="entry name" value="Rubredoxin-like_dom"/>
</dbReference>
<dbReference type="InterPro" id="IPR024935">
    <property type="entry name" value="Rubredoxin_dom"/>
</dbReference>
<dbReference type="InterPro" id="IPR050526">
    <property type="entry name" value="Rubredoxin_ET"/>
</dbReference>
<dbReference type="InterPro" id="IPR018527">
    <property type="entry name" value="Rubredoxin_Fe_BS"/>
</dbReference>
<dbReference type="PANTHER" id="PTHR47627">
    <property type="entry name" value="RUBREDOXIN"/>
    <property type="match status" value="1"/>
</dbReference>
<dbReference type="PANTHER" id="PTHR47627:SF1">
    <property type="entry name" value="RUBREDOXIN-1-RELATED"/>
    <property type="match status" value="1"/>
</dbReference>
<dbReference type="Pfam" id="PF00301">
    <property type="entry name" value="Rubredoxin"/>
    <property type="match status" value="1"/>
</dbReference>
<dbReference type="PRINTS" id="PR00163">
    <property type="entry name" value="RUBREDOXIN"/>
</dbReference>
<dbReference type="SUPFAM" id="SSF57802">
    <property type="entry name" value="Rubredoxin-like"/>
    <property type="match status" value="1"/>
</dbReference>
<dbReference type="PROSITE" id="PS00202">
    <property type="entry name" value="RUBREDOXIN"/>
    <property type="match status" value="1"/>
</dbReference>
<dbReference type="PROSITE" id="PS50903">
    <property type="entry name" value="RUBREDOXIN_LIKE"/>
    <property type="match status" value="1"/>
</dbReference>
<gene>
    <name type="primary">hupR</name>
</gene>